<gene>
    <name evidence="1" type="primary">ilvC</name>
    <name type="ordered locus">Asuc_0563</name>
</gene>
<feature type="chain" id="PRO_1000072318" description="Ketol-acid reductoisomerase (NADP(+))">
    <location>
        <begin position="1"/>
        <end position="493"/>
    </location>
</feature>
<feature type="domain" description="KARI N-terminal Rossmann" evidence="2">
    <location>
        <begin position="14"/>
        <end position="208"/>
    </location>
</feature>
<feature type="domain" description="KARI C-terminal knotted 1" evidence="3">
    <location>
        <begin position="209"/>
        <end position="345"/>
    </location>
</feature>
<feature type="domain" description="KARI C-terminal knotted 2" evidence="3">
    <location>
        <begin position="346"/>
        <end position="486"/>
    </location>
</feature>
<feature type="active site" evidence="1">
    <location>
        <position position="132"/>
    </location>
</feature>
<feature type="binding site" evidence="1">
    <location>
        <begin position="45"/>
        <end position="48"/>
    </location>
    <ligand>
        <name>NADP(+)</name>
        <dbReference type="ChEBI" id="CHEBI:58349"/>
    </ligand>
</feature>
<feature type="binding site" evidence="1">
    <location>
        <position position="68"/>
    </location>
    <ligand>
        <name>NADP(+)</name>
        <dbReference type="ChEBI" id="CHEBI:58349"/>
    </ligand>
</feature>
<feature type="binding site" evidence="1">
    <location>
        <position position="76"/>
    </location>
    <ligand>
        <name>NADP(+)</name>
        <dbReference type="ChEBI" id="CHEBI:58349"/>
    </ligand>
</feature>
<feature type="binding site" evidence="1">
    <location>
        <position position="78"/>
    </location>
    <ligand>
        <name>NADP(+)</name>
        <dbReference type="ChEBI" id="CHEBI:58349"/>
    </ligand>
</feature>
<feature type="binding site" evidence="1">
    <location>
        <begin position="108"/>
        <end position="110"/>
    </location>
    <ligand>
        <name>NADP(+)</name>
        <dbReference type="ChEBI" id="CHEBI:58349"/>
    </ligand>
</feature>
<feature type="binding site" evidence="1">
    <location>
        <position position="158"/>
    </location>
    <ligand>
        <name>NADP(+)</name>
        <dbReference type="ChEBI" id="CHEBI:58349"/>
    </ligand>
</feature>
<feature type="binding site" evidence="1">
    <location>
        <position position="217"/>
    </location>
    <ligand>
        <name>Mg(2+)</name>
        <dbReference type="ChEBI" id="CHEBI:18420"/>
        <label>1</label>
    </ligand>
</feature>
<feature type="binding site" evidence="1">
    <location>
        <position position="217"/>
    </location>
    <ligand>
        <name>Mg(2+)</name>
        <dbReference type="ChEBI" id="CHEBI:18420"/>
        <label>2</label>
    </ligand>
</feature>
<feature type="binding site" evidence="1">
    <location>
        <position position="221"/>
    </location>
    <ligand>
        <name>Mg(2+)</name>
        <dbReference type="ChEBI" id="CHEBI:18420"/>
        <label>1</label>
    </ligand>
</feature>
<feature type="binding site" evidence="1">
    <location>
        <position position="390"/>
    </location>
    <ligand>
        <name>Mg(2+)</name>
        <dbReference type="ChEBI" id="CHEBI:18420"/>
        <label>2</label>
    </ligand>
</feature>
<feature type="binding site" evidence="1">
    <location>
        <position position="394"/>
    </location>
    <ligand>
        <name>Mg(2+)</name>
        <dbReference type="ChEBI" id="CHEBI:18420"/>
        <label>2</label>
    </ligand>
</feature>
<feature type="binding site" evidence="1">
    <location>
        <position position="415"/>
    </location>
    <ligand>
        <name>substrate</name>
    </ligand>
</feature>
<sequence length="493" mass="54331">MSNYFNTLNLREKLDQLGRCRFMDRSEFSDGCNFLKGKKIVIVGCGAQGLNQGLNMRDSGLDISYALRKAAIEEKRPSFQRATENGFKVGTYEELIPTADLVINLTPDKQHSKVVSDVMPLMKQGAAFGYSHGFNIVEVGEQIREDITVVMSAPKCPGTEVREEYKRGFGVPTLIAVHPANDPKGEGMAIAKAWASATGGDRAGVLESSFVAEVKSDLMGEQTILCGMLQAGSIVCYDKLIADGKDPAYAGKLIQYGWETITEALKQGGITLMMDRLSNAAKLRAFELSEQIKEKLGFLYLKHMDDIISGEFSRVMMEDWANGDKDLLAWREATGKTAFENAPKADGIKISEQEYFDNGVLMVAMVKAGVEMAFDAMVASGIYEESAYYESLHELPLIANTIARKRLYEMNVVISDTAEYGNYLFSNVATPILAKEIIPALQKGDLGEPTPAVDIDNVTLRDVNDEIRNHPVELIGLELRGYMTDMKRISSQG</sequence>
<accession>A6VLU1</accession>
<evidence type="ECO:0000255" key="1">
    <source>
        <dbReference type="HAMAP-Rule" id="MF_00435"/>
    </source>
</evidence>
<evidence type="ECO:0000255" key="2">
    <source>
        <dbReference type="PROSITE-ProRule" id="PRU01197"/>
    </source>
</evidence>
<evidence type="ECO:0000255" key="3">
    <source>
        <dbReference type="PROSITE-ProRule" id="PRU01198"/>
    </source>
</evidence>
<organism>
    <name type="scientific">Actinobacillus succinogenes (strain ATCC 55618 / DSM 22257 / CCUG 43843 / 130Z)</name>
    <dbReference type="NCBI Taxonomy" id="339671"/>
    <lineage>
        <taxon>Bacteria</taxon>
        <taxon>Pseudomonadati</taxon>
        <taxon>Pseudomonadota</taxon>
        <taxon>Gammaproteobacteria</taxon>
        <taxon>Pasteurellales</taxon>
        <taxon>Pasteurellaceae</taxon>
        <taxon>Actinobacillus</taxon>
    </lineage>
</organism>
<name>ILVC_ACTSZ</name>
<keyword id="KW-0028">Amino-acid biosynthesis</keyword>
<keyword id="KW-0100">Branched-chain amino acid biosynthesis</keyword>
<keyword id="KW-0460">Magnesium</keyword>
<keyword id="KW-0479">Metal-binding</keyword>
<keyword id="KW-0521">NADP</keyword>
<keyword id="KW-0560">Oxidoreductase</keyword>
<keyword id="KW-1185">Reference proteome</keyword>
<keyword id="KW-0677">Repeat</keyword>
<dbReference type="EC" id="1.1.1.86" evidence="1"/>
<dbReference type="EMBL" id="CP000746">
    <property type="protein sequence ID" value="ABR73938.1"/>
    <property type="molecule type" value="Genomic_DNA"/>
</dbReference>
<dbReference type="RefSeq" id="WP_012072318.1">
    <property type="nucleotide sequence ID" value="NC_009655.1"/>
</dbReference>
<dbReference type="SMR" id="A6VLU1"/>
<dbReference type="STRING" id="339671.Asuc_0563"/>
<dbReference type="KEGG" id="asu:Asuc_0563"/>
<dbReference type="eggNOG" id="COG0059">
    <property type="taxonomic scope" value="Bacteria"/>
</dbReference>
<dbReference type="HOGENOM" id="CLU_551905_0_0_6"/>
<dbReference type="OrthoDB" id="9804088at2"/>
<dbReference type="UniPathway" id="UPA00047">
    <property type="reaction ID" value="UER00056"/>
</dbReference>
<dbReference type="UniPathway" id="UPA00049">
    <property type="reaction ID" value="UER00060"/>
</dbReference>
<dbReference type="Proteomes" id="UP000001114">
    <property type="component" value="Chromosome"/>
</dbReference>
<dbReference type="GO" id="GO:0005829">
    <property type="term" value="C:cytosol"/>
    <property type="evidence" value="ECO:0007669"/>
    <property type="project" value="TreeGrafter"/>
</dbReference>
<dbReference type="GO" id="GO:0004455">
    <property type="term" value="F:ketol-acid reductoisomerase activity"/>
    <property type="evidence" value="ECO:0007669"/>
    <property type="project" value="UniProtKB-UniRule"/>
</dbReference>
<dbReference type="GO" id="GO:0000287">
    <property type="term" value="F:magnesium ion binding"/>
    <property type="evidence" value="ECO:0007669"/>
    <property type="project" value="UniProtKB-UniRule"/>
</dbReference>
<dbReference type="GO" id="GO:0009097">
    <property type="term" value="P:isoleucine biosynthetic process"/>
    <property type="evidence" value="ECO:0007669"/>
    <property type="project" value="UniProtKB-UniRule"/>
</dbReference>
<dbReference type="GO" id="GO:0009099">
    <property type="term" value="P:L-valine biosynthetic process"/>
    <property type="evidence" value="ECO:0007669"/>
    <property type="project" value="UniProtKB-UniRule"/>
</dbReference>
<dbReference type="FunFam" id="1.10.1040.10:FF:000007">
    <property type="entry name" value="Ketol-acid reductoisomerase (NADP(+))"/>
    <property type="match status" value="1"/>
</dbReference>
<dbReference type="FunFam" id="3.40.50.720:FF:000043">
    <property type="entry name" value="Ketol-acid reductoisomerase (NADP(+))"/>
    <property type="match status" value="1"/>
</dbReference>
<dbReference type="Gene3D" id="1.10.1040.10">
    <property type="entry name" value="N-(1-d-carboxylethyl)-l-norvaline Dehydrogenase, domain 2"/>
    <property type="match status" value="1"/>
</dbReference>
<dbReference type="Gene3D" id="3.40.50.720">
    <property type="entry name" value="NAD(P)-binding Rossmann-like Domain"/>
    <property type="match status" value="1"/>
</dbReference>
<dbReference type="HAMAP" id="MF_00435">
    <property type="entry name" value="IlvC"/>
    <property type="match status" value="1"/>
</dbReference>
<dbReference type="InterPro" id="IPR008927">
    <property type="entry name" value="6-PGluconate_DH-like_C_sf"/>
</dbReference>
<dbReference type="InterPro" id="IPR013328">
    <property type="entry name" value="6PGD_dom2"/>
</dbReference>
<dbReference type="InterPro" id="IPR013023">
    <property type="entry name" value="KARI"/>
</dbReference>
<dbReference type="InterPro" id="IPR000506">
    <property type="entry name" value="KARI_C"/>
</dbReference>
<dbReference type="InterPro" id="IPR013116">
    <property type="entry name" value="KARI_N"/>
</dbReference>
<dbReference type="InterPro" id="IPR036291">
    <property type="entry name" value="NAD(P)-bd_dom_sf"/>
</dbReference>
<dbReference type="NCBIfam" id="TIGR00465">
    <property type="entry name" value="ilvC"/>
    <property type="match status" value="1"/>
</dbReference>
<dbReference type="NCBIfam" id="NF003557">
    <property type="entry name" value="PRK05225.1"/>
    <property type="match status" value="1"/>
</dbReference>
<dbReference type="PANTHER" id="PTHR21371">
    <property type="entry name" value="KETOL-ACID REDUCTOISOMERASE, MITOCHONDRIAL"/>
    <property type="match status" value="1"/>
</dbReference>
<dbReference type="PANTHER" id="PTHR21371:SF1">
    <property type="entry name" value="KETOL-ACID REDUCTOISOMERASE, MITOCHONDRIAL"/>
    <property type="match status" value="1"/>
</dbReference>
<dbReference type="Pfam" id="PF01450">
    <property type="entry name" value="KARI_C"/>
    <property type="match status" value="2"/>
</dbReference>
<dbReference type="Pfam" id="PF07991">
    <property type="entry name" value="KARI_N"/>
    <property type="match status" value="1"/>
</dbReference>
<dbReference type="SUPFAM" id="SSF48179">
    <property type="entry name" value="6-phosphogluconate dehydrogenase C-terminal domain-like"/>
    <property type="match status" value="2"/>
</dbReference>
<dbReference type="SUPFAM" id="SSF51735">
    <property type="entry name" value="NAD(P)-binding Rossmann-fold domains"/>
    <property type="match status" value="1"/>
</dbReference>
<dbReference type="PROSITE" id="PS51851">
    <property type="entry name" value="KARI_C"/>
    <property type="match status" value="2"/>
</dbReference>
<dbReference type="PROSITE" id="PS51850">
    <property type="entry name" value="KARI_N"/>
    <property type="match status" value="1"/>
</dbReference>
<comment type="function">
    <text evidence="1">Involved in the biosynthesis of branched-chain amino acids (BCAA). Catalyzes an alkyl-migration followed by a ketol-acid reduction of (S)-2-acetolactate (S2AL) to yield (R)-2,3-dihydroxy-isovalerate. In the isomerase reaction, S2AL is rearranged via a Mg-dependent methyl migration to produce 3-hydroxy-3-methyl-2-ketobutyrate (HMKB). In the reductase reaction, this 2-ketoacid undergoes a metal-dependent reduction by NADPH to yield (R)-2,3-dihydroxy-isovalerate.</text>
</comment>
<comment type="catalytic activity">
    <reaction evidence="1">
        <text>(2R)-2,3-dihydroxy-3-methylbutanoate + NADP(+) = (2S)-2-acetolactate + NADPH + H(+)</text>
        <dbReference type="Rhea" id="RHEA:22068"/>
        <dbReference type="ChEBI" id="CHEBI:15378"/>
        <dbReference type="ChEBI" id="CHEBI:49072"/>
        <dbReference type="ChEBI" id="CHEBI:57783"/>
        <dbReference type="ChEBI" id="CHEBI:58349"/>
        <dbReference type="ChEBI" id="CHEBI:58476"/>
        <dbReference type="EC" id="1.1.1.86"/>
    </reaction>
</comment>
<comment type="catalytic activity">
    <reaction evidence="1">
        <text>(2R,3R)-2,3-dihydroxy-3-methylpentanoate + NADP(+) = (S)-2-ethyl-2-hydroxy-3-oxobutanoate + NADPH + H(+)</text>
        <dbReference type="Rhea" id="RHEA:13493"/>
        <dbReference type="ChEBI" id="CHEBI:15378"/>
        <dbReference type="ChEBI" id="CHEBI:49256"/>
        <dbReference type="ChEBI" id="CHEBI:49258"/>
        <dbReference type="ChEBI" id="CHEBI:57783"/>
        <dbReference type="ChEBI" id="CHEBI:58349"/>
        <dbReference type="EC" id="1.1.1.86"/>
    </reaction>
</comment>
<comment type="cofactor">
    <cofactor evidence="1">
        <name>Mg(2+)</name>
        <dbReference type="ChEBI" id="CHEBI:18420"/>
    </cofactor>
    <text evidence="1">Binds 2 magnesium ions per subunit.</text>
</comment>
<comment type="pathway">
    <text evidence="1">Amino-acid biosynthesis; L-isoleucine biosynthesis; L-isoleucine from 2-oxobutanoate: step 2/4.</text>
</comment>
<comment type="pathway">
    <text evidence="1">Amino-acid biosynthesis; L-valine biosynthesis; L-valine from pyruvate: step 2/4.</text>
</comment>
<comment type="similarity">
    <text evidence="1">Belongs to the ketol-acid reductoisomerase family.</text>
</comment>
<protein>
    <recommendedName>
        <fullName evidence="1">Ketol-acid reductoisomerase (NADP(+))</fullName>
        <shortName evidence="1">KARI</shortName>
        <ecNumber evidence="1">1.1.1.86</ecNumber>
    </recommendedName>
    <alternativeName>
        <fullName evidence="1">Acetohydroxy-acid isomeroreductase</fullName>
        <shortName evidence="1">AHIR</shortName>
    </alternativeName>
    <alternativeName>
        <fullName evidence="1">Alpha-keto-beta-hydroxylacyl reductoisomerase</fullName>
    </alternativeName>
    <alternativeName>
        <fullName evidence="1">Ketol-acid reductoisomerase type 2</fullName>
    </alternativeName>
    <alternativeName>
        <fullName evidence="1">Ketol-acid reductoisomerase type II</fullName>
    </alternativeName>
</protein>
<reference key="1">
    <citation type="journal article" date="2010" name="BMC Genomics">
        <title>A genomic perspective on the potential of Actinobacillus succinogenes for industrial succinate production.</title>
        <authorList>
            <person name="McKinlay J.B."/>
            <person name="Laivenieks M."/>
            <person name="Schindler B.D."/>
            <person name="McKinlay A.A."/>
            <person name="Siddaramappa S."/>
            <person name="Challacombe J.F."/>
            <person name="Lowry S.R."/>
            <person name="Clum A."/>
            <person name="Lapidus A.L."/>
            <person name="Burkhart K.B."/>
            <person name="Harkins V."/>
            <person name="Vieille C."/>
        </authorList>
    </citation>
    <scope>NUCLEOTIDE SEQUENCE [LARGE SCALE GENOMIC DNA]</scope>
    <source>
        <strain>ATCC 55618 / DSM 22257 / CCUG 43843 / 130Z</strain>
    </source>
</reference>
<proteinExistence type="inferred from homology"/>